<reference key="1">
    <citation type="journal article" date="1997" name="Nature">
        <title>The complete genome sequence of the hyperthermophilic, sulphate-reducing archaeon Archaeoglobus fulgidus.</title>
        <authorList>
            <person name="Klenk H.-P."/>
            <person name="Clayton R.A."/>
            <person name="Tomb J.-F."/>
            <person name="White O."/>
            <person name="Nelson K.E."/>
            <person name="Ketchum K.A."/>
            <person name="Dodson R.J."/>
            <person name="Gwinn M.L."/>
            <person name="Hickey E.K."/>
            <person name="Peterson J.D."/>
            <person name="Richardson D.L."/>
            <person name="Kerlavage A.R."/>
            <person name="Graham D.E."/>
            <person name="Kyrpides N.C."/>
            <person name="Fleischmann R.D."/>
            <person name="Quackenbush J."/>
            <person name="Lee N.H."/>
            <person name="Sutton G.G."/>
            <person name="Gill S.R."/>
            <person name="Kirkness E.F."/>
            <person name="Dougherty B.A."/>
            <person name="McKenney K."/>
            <person name="Adams M.D."/>
            <person name="Loftus B.J."/>
            <person name="Peterson S.N."/>
            <person name="Reich C.I."/>
            <person name="McNeil L.K."/>
            <person name="Badger J.H."/>
            <person name="Glodek A."/>
            <person name="Zhou L."/>
            <person name="Overbeek R."/>
            <person name="Gocayne J.D."/>
            <person name="Weidman J.F."/>
            <person name="McDonald L.A."/>
            <person name="Utterback T.R."/>
            <person name="Cotton M.D."/>
            <person name="Spriggs T."/>
            <person name="Artiach P."/>
            <person name="Kaine B.P."/>
            <person name="Sykes S.M."/>
            <person name="Sadow P.W."/>
            <person name="D'Andrea K.P."/>
            <person name="Bowman C."/>
            <person name="Fujii C."/>
            <person name="Garland S.A."/>
            <person name="Mason T.M."/>
            <person name="Olsen G.J."/>
            <person name="Fraser C.M."/>
            <person name="Smith H.O."/>
            <person name="Woese C.R."/>
            <person name="Venter J.C."/>
        </authorList>
    </citation>
    <scope>NUCLEOTIDE SEQUENCE [LARGE SCALE GENOMIC DNA]</scope>
    <source>
        <strain>ATCC 49558 / DSM 4304 / JCM 9628 / NBRC 100126 / VC-16</strain>
    </source>
</reference>
<comment type="function">
    <text evidence="1">Forms part of the ribosomal stalk, playing a central role in the interaction of the ribosome with GTP-bound translation factors.</text>
</comment>
<comment type="subunit">
    <text evidence="1">Part of the 50S ribosomal subunit. Homodimer, it forms part of the ribosomal stalk which helps the ribosome interact with GTP-bound translation factors. Forms a heptameric uL10/P0(P1)2(P1)2(P1)2 complex, where uL10/P0 forms an elongated spine to which the P1 dimers bind in a sequential fashion.</text>
</comment>
<comment type="similarity">
    <text evidence="1">Belongs to the eukaryotic ribosomal protein P1/P2 family.</text>
</comment>
<evidence type="ECO:0000255" key="1">
    <source>
        <dbReference type="HAMAP-Rule" id="MF_01478"/>
    </source>
</evidence>
<evidence type="ECO:0000256" key="2">
    <source>
        <dbReference type="SAM" id="MobiDB-lite"/>
    </source>
</evidence>
<proteinExistence type="inferred from homology"/>
<accession>O28780</accession>
<protein>
    <recommendedName>
        <fullName evidence="1">Large ribosomal subunit protein P1</fullName>
    </recommendedName>
    <alternativeName>
        <fullName evidence="1">50S ribosomal protein L12</fullName>
    </alternativeName>
</protein>
<dbReference type="EMBL" id="AE000782">
    <property type="protein sequence ID" value="AAB89748.1"/>
    <property type="molecule type" value="Genomic_DNA"/>
</dbReference>
<dbReference type="PIR" id="C69436">
    <property type="entry name" value="C69436"/>
</dbReference>
<dbReference type="SMR" id="O28780"/>
<dbReference type="STRING" id="224325.AF_1492"/>
<dbReference type="PaxDb" id="224325-AF_1492"/>
<dbReference type="DNASU" id="1484719"/>
<dbReference type="EnsemblBacteria" id="AAB89748">
    <property type="protein sequence ID" value="AAB89748"/>
    <property type="gene ID" value="AF_1492"/>
</dbReference>
<dbReference type="KEGG" id="afu:AF_1492"/>
<dbReference type="eggNOG" id="arCOG04287">
    <property type="taxonomic scope" value="Archaea"/>
</dbReference>
<dbReference type="HOGENOM" id="CLU_114656_2_0_2"/>
<dbReference type="OrthoDB" id="3337at2157"/>
<dbReference type="PhylomeDB" id="O28780"/>
<dbReference type="Proteomes" id="UP000002199">
    <property type="component" value="Chromosome"/>
</dbReference>
<dbReference type="GO" id="GO:1990904">
    <property type="term" value="C:ribonucleoprotein complex"/>
    <property type="evidence" value="ECO:0007669"/>
    <property type="project" value="UniProtKB-KW"/>
</dbReference>
<dbReference type="GO" id="GO:0005840">
    <property type="term" value="C:ribosome"/>
    <property type="evidence" value="ECO:0007669"/>
    <property type="project" value="UniProtKB-KW"/>
</dbReference>
<dbReference type="GO" id="GO:0003735">
    <property type="term" value="F:structural constituent of ribosome"/>
    <property type="evidence" value="ECO:0007669"/>
    <property type="project" value="InterPro"/>
</dbReference>
<dbReference type="GO" id="GO:0006414">
    <property type="term" value="P:translational elongation"/>
    <property type="evidence" value="ECO:0007669"/>
    <property type="project" value="InterPro"/>
</dbReference>
<dbReference type="CDD" id="cd05832">
    <property type="entry name" value="Ribosomal_L12p"/>
    <property type="match status" value="1"/>
</dbReference>
<dbReference type="FunFam" id="1.10.10.1410:FF:000002">
    <property type="entry name" value="60S acidic ribosomal protein P2"/>
    <property type="match status" value="1"/>
</dbReference>
<dbReference type="Gene3D" id="1.10.10.1410">
    <property type="match status" value="1"/>
</dbReference>
<dbReference type="HAMAP" id="MF_01478">
    <property type="entry name" value="Ribosomal_L12_arch"/>
    <property type="match status" value="1"/>
</dbReference>
<dbReference type="InterPro" id="IPR038716">
    <property type="entry name" value="P1/P2_N_sf"/>
</dbReference>
<dbReference type="InterPro" id="IPR027534">
    <property type="entry name" value="Ribosomal_P1/P2"/>
</dbReference>
<dbReference type="InterPro" id="IPR022295">
    <property type="entry name" value="Ribosomal_P1_arc"/>
</dbReference>
<dbReference type="NCBIfam" id="TIGR03685">
    <property type="entry name" value="ribo_P1_arch"/>
    <property type="match status" value="1"/>
</dbReference>
<dbReference type="PANTHER" id="PTHR45696">
    <property type="entry name" value="60S ACIDIC RIBOSOMAL PROTEIN P1"/>
    <property type="match status" value="1"/>
</dbReference>
<dbReference type="PANTHER" id="PTHR45696:SF10">
    <property type="entry name" value="LARGE RIBOSOMAL SUBUNIT PROTEIN P1"/>
    <property type="match status" value="1"/>
</dbReference>
<dbReference type="Pfam" id="PF00428">
    <property type="entry name" value="Ribosomal_60s"/>
    <property type="match status" value="1"/>
</dbReference>
<organism>
    <name type="scientific">Archaeoglobus fulgidus (strain ATCC 49558 / DSM 4304 / JCM 9628 / NBRC 100126 / VC-16)</name>
    <dbReference type="NCBI Taxonomy" id="224325"/>
    <lineage>
        <taxon>Archaea</taxon>
        <taxon>Methanobacteriati</taxon>
        <taxon>Methanobacteriota</taxon>
        <taxon>Archaeoglobi</taxon>
        <taxon>Archaeoglobales</taxon>
        <taxon>Archaeoglobaceae</taxon>
        <taxon>Archaeoglobus</taxon>
    </lineage>
</organism>
<keyword id="KW-1185">Reference proteome</keyword>
<keyword id="KW-0687">Ribonucleoprotein</keyword>
<keyword id="KW-0689">Ribosomal protein</keyword>
<gene>
    <name evidence="1" type="primary">rpl12</name>
    <name type="ordered locus">AF_1492</name>
</gene>
<sequence>MEYVYAALLLHSAGKEITEDNVKAVLEAAGVEVDEARVKALVAALEGVNIDEAIQKAAMPMAVAAAPAAAAAAPAEEAKEEAKEEEEEEEEVKEEEAIEGLGALFG</sequence>
<feature type="chain" id="PRO_0000157626" description="Large ribosomal subunit protein P1">
    <location>
        <begin position="1"/>
        <end position="106"/>
    </location>
</feature>
<feature type="region of interest" description="Disordered" evidence="2">
    <location>
        <begin position="69"/>
        <end position="106"/>
    </location>
</feature>
<feature type="compositionally biased region" description="Acidic residues" evidence="2">
    <location>
        <begin position="83"/>
        <end position="98"/>
    </location>
</feature>
<name>RL12_ARCFU</name>